<reference key="1">
    <citation type="journal article" date="2005" name="Science">
        <title>Life at depth: Photobacterium profundum genome sequence and expression analysis.</title>
        <authorList>
            <person name="Vezzi A."/>
            <person name="Campanaro S."/>
            <person name="D'Angelo M."/>
            <person name="Simonato F."/>
            <person name="Vitulo N."/>
            <person name="Lauro F.M."/>
            <person name="Cestaro A."/>
            <person name="Malacrida G."/>
            <person name="Simionati B."/>
            <person name="Cannata N."/>
            <person name="Romualdi C."/>
            <person name="Bartlett D.H."/>
            <person name="Valle G."/>
        </authorList>
    </citation>
    <scope>NUCLEOTIDE SEQUENCE [LARGE SCALE GENOMIC DNA]</scope>
    <source>
        <strain>ATCC BAA-1253 / SS9</strain>
    </source>
</reference>
<evidence type="ECO:0000255" key="1">
    <source>
        <dbReference type="HAMAP-Rule" id="MF_01363"/>
    </source>
</evidence>
<evidence type="ECO:0000305" key="2"/>
<feature type="chain" id="PRO_0000269356" description="Large ribosomal subunit protein bL21">
    <location>
        <begin position="1"/>
        <end position="103"/>
    </location>
</feature>
<proteinExistence type="inferred from homology"/>
<dbReference type="EMBL" id="CR378664">
    <property type="protein sequence ID" value="CAG18826.1"/>
    <property type="molecule type" value="Genomic_DNA"/>
</dbReference>
<dbReference type="RefSeq" id="WP_006228393.1">
    <property type="nucleotide sequence ID" value="NC_006370.1"/>
</dbReference>
<dbReference type="SMR" id="Q6LV49"/>
<dbReference type="STRING" id="298386.PBPRA0394"/>
<dbReference type="KEGG" id="ppr:PBPRA0394"/>
<dbReference type="eggNOG" id="COG0261">
    <property type="taxonomic scope" value="Bacteria"/>
</dbReference>
<dbReference type="HOGENOM" id="CLU_061463_3_3_6"/>
<dbReference type="Proteomes" id="UP000000593">
    <property type="component" value="Chromosome 1"/>
</dbReference>
<dbReference type="GO" id="GO:0005737">
    <property type="term" value="C:cytoplasm"/>
    <property type="evidence" value="ECO:0007669"/>
    <property type="project" value="UniProtKB-ARBA"/>
</dbReference>
<dbReference type="GO" id="GO:1990904">
    <property type="term" value="C:ribonucleoprotein complex"/>
    <property type="evidence" value="ECO:0007669"/>
    <property type="project" value="UniProtKB-KW"/>
</dbReference>
<dbReference type="GO" id="GO:0005840">
    <property type="term" value="C:ribosome"/>
    <property type="evidence" value="ECO:0007669"/>
    <property type="project" value="UniProtKB-KW"/>
</dbReference>
<dbReference type="GO" id="GO:0019843">
    <property type="term" value="F:rRNA binding"/>
    <property type="evidence" value="ECO:0007669"/>
    <property type="project" value="UniProtKB-UniRule"/>
</dbReference>
<dbReference type="GO" id="GO:0003735">
    <property type="term" value="F:structural constituent of ribosome"/>
    <property type="evidence" value="ECO:0007669"/>
    <property type="project" value="InterPro"/>
</dbReference>
<dbReference type="GO" id="GO:0006412">
    <property type="term" value="P:translation"/>
    <property type="evidence" value="ECO:0007669"/>
    <property type="project" value="UniProtKB-UniRule"/>
</dbReference>
<dbReference type="HAMAP" id="MF_01363">
    <property type="entry name" value="Ribosomal_bL21"/>
    <property type="match status" value="1"/>
</dbReference>
<dbReference type="InterPro" id="IPR028909">
    <property type="entry name" value="bL21-like"/>
</dbReference>
<dbReference type="InterPro" id="IPR036164">
    <property type="entry name" value="bL21-like_sf"/>
</dbReference>
<dbReference type="InterPro" id="IPR001787">
    <property type="entry name" value="Ribosomal_bL21"/>
</dbReference>
<dbReference type="InterPro" id="IPR018258">
    <property type="entry name" value="Ribosomal_bL21_CS"/>
</dbReference>
<dbReference type="NCBIfam" id="TIGR00061">
    <property type="entry name" value="L21"/>
    <property type="match status" value="1"/>
</dbReference>
<dbReference type="PANTHER" id="PTHR21349">
    <property type="entry name" value="50S RIBOSOMAL PROTEIN L21"/>
    <property type="match status" value="1"/>
</dbReference>
<dbReference type="PANTHER" id="PTHR21349:SF0">
    <property type="entry name" value="LARGE RIBOSOMAL SUBUNIT PROTEIN BL21M"/>
    <property type="match status" value="1"/>
</dbReference>
<dbReference type="Pfam" id="PF00829">
    <property type="entry name" value="Ribosomal_L21p"/>
    <property type="match status" value="1"/>
</dbReference>
<dbReference type="SUPFAM" id="SSF141091">
    <property type="entry name" value="L21p-like"/>
    <property type="match status" value="1"/>
</dbReference>
<dbReference type="PROSITE" id="PS01169">
    <property type="entry name" value="RIBOSOMAL_L21"/>
    <property type="match status" value="1"/>
</dbReference>
<gene>
    <name evidence="1" type="primary">rplU</name>
    <name type="ordered locus">PBPRA0394</name>
</gene>
<keyword id="KW-1185">Reference proteome</keyword>
<keyword id="KW-0687">Ribonucleoprotein</keyword>
<keyword id="KW-0689">Ribosomal protein</keyword>
<keyword id="KW-0694">RNA-binding</keyword>
<keyword id="KW-0699">rRNA-binding</keyword>
<organism>
    <name type="scientific">Photobacterium profundum (strain SS9)</name>
    <dbReference type="NCBI Taxonomy" id="298386"/>
    <lineage>
        <taxon>Bacteria</taxon>
        <taxon>Pseudomonadati</taxon>
        <taxon>Pseudomonadota</taxon>
        <taxon>Gammaproteobacteria</taxon>
        <taxon>Vibrionales</taxon>
        <taxon>Vibrionaceae</taxon>
        <taxon>Photobacterium</taxon>
    </lineage>
</organism>
<name>RL21_PHOPR</name>
<sequence>MYAVFQSGGKQHRVSEGQTLRLEKLEAETGANVEFDCVLLVANGEEVTVGAPFVTGGKVTAEVVTHGRGDKIKVVKFRRRKHSRKQMGHRQWFTEVKITGISA</sequence>
<comment type="function">
    <text evidence="1">This protein binds to 23S rRNA in the presence of protein L20.</text>
</comment>
<comment type="subunit">
    <text evidence="1">Part of the 50S ribosomal subunit. Contacts protein L20.</text>
</comment>
<comment type="similarity">
    <text evidence="1">Belongs to the bacterial ribosomal protein bL21 family.</text>
</comment>
<protein>
    <recommendedName>
        <fullName evidence="1">Large ribosomal subunit protein bL21</fullName>
    </recommendedName>
    <alternativeName>
        <fullName evidence="2">50S ribosomal protein L21</fullName>
    </alternativeName>
</protein>
<accession>Q6LV49</accession>